<proteinExistence type="inferred from homology"/>
<feature type="chain" id="PRO_0000134306" description="Small ribosomal subunit protein uS2c">
    <location>
        <begin position="1"/>
        <end position="236"/>
    </location>
</feature>
<name>RR2_OENEH</name>
<keyword id="KW-0150">Chloroplast</keyword>
<keyword id="KW-0934">Plastid</keyword>
<keyword id="KW-0687">Ribonucleoprotein</keyword>
<keyword id="KW-0689">Ribosomal protein</keyword>
<accession>Q9MTM2</accession>
<evidence type="ECO:0000305" key="1"/>
<protein>
    <recommendedName>
        <fullName evidence="1">Small ribosomal subunit protein uS2c</fullName>
    </recommendedName>
    <alternativeName>
        <fullName>30S ribosomal protein S2, chloroplastic</fullName>
    </alternativeName>
</protein>
<dbReference type="EMBL" id="AJ271079">
    <property type="protein sequence ID" value="CAB67154.2"/>
    <property type="molecule type" value="Genomic_DNA"/>
</dbReference>
<dbReference type="RefSeq" id="NP_084689.2">
    <property type="nucleotide sequence ID" value="NC_002693.2"/>
</dbReference>
<dbReference type="SMR" id="Q9MTM2"/>
<dbReference type="GeneID" id="802806"/>
<dbReference type="GO" id="GO:0009507">
    <property type="term" value="C:chloroplast"/>
    <property type="evidence" value="ECO:0007669"/>
    <property type="project" value="UniProtKB-SubCell"/>
</dbReference>
<dbReference type="GO" id="GO:0005763">
    <property type="term" value="C:mitochondrial small ribosomal subunit"/>
    <property type="evidence" value="ECO:0007669"/>
    <property type="project" value="TreeGrafter"/>
</dbReference>
<dbReference type="GO" id="GO:0003735">
    <property type="term" value="F:structural constituent of ribosome"/>
    <property type="evidence" value="ECO:0007669"/>
    <property type="project" value="InterPro"/>
</dbReference>
<dbReference type="GO" id="GO:0006412">
    <property type="term" value="P:translation"/>
    <property type="evidence" value="ECO:0007669"/>
    <property type="project" value="UniProtKB-UniRule"/>
</dbReference>
<dbReference type="CDD" id="cd01425">
    <property type="entry name" value="RPS2"/>
    <property type="match status" value="1"/>
</dbReference>
<dbReference type="FunFam" id="1.10.287.610:FF:000001">
    <property type="entry name" value="30S ribosomal protein S2"/>
    <property type="match status" value="1"/>
</dbReference>
<dbReference type="Gene3D" id="3.40.50.10490">
    <property type="entry name" value="Glucose-6-phosphate isomerase like protein, domain 1"/>
    <property type="match status" value="1"/>
</dbReference>
<dbReference type="Gene3D" id="1.10.287.610">
    <property type="entry name" value="Helix hairpin bin"/>
    <property type="match status" value="1"/>
</dbReference>
<dbReference type="HAMAP" id="MF_00291_B">
    <property type="entry name" value="Ribosomal_uS2_B"/>
    <property type="match status" value="1"/>
</dbReference>
<dbReference type="InterPro" id="IPR001865">
    <property type="entry name" value="Ribosomal_uS2"/>
</dbReference>
<dbReference type="InterPro" id="IPR005706">
    <property type="entry name" value="Ribosomal_uS2_bac/mit/plastid"/>
</dbReference>
<dbReference type="InterPro" id="IPR018130">
    <property type="entry name" value="Ribosomal_uS2_CS"/>
</dbReference>
<dbReference type="InterPro" id="IPR023591">
    <property type="entry name" value="Ribosomal_uS2_flav_dom_sf"/>
</dbReference>
<dbReference type="NCBIfam" id="TIGR01011">
    <property type="entry name" value="rpsB_bact"/>
    <property type="match status" value="1"/>
</dbReference>
<dbReference type="PANTHER" id="PTHR12534">
    <property type="entry name" value="30S RIBOSOMAL PROTEIN S2 PROKARYOTIC AND ORGANELLAR"/>
    <property type="match status" value="1"/>
</dbReference>
<dbReference type="PANTHER" id="PTHR12534:SF0">
    <property type="entry name" value="SMALL RIBOSOMAL SUBUNIT PROTEIN US2M"/>
    <property type="match status" value="1"/>
</dbReference>
<dbReference type="Pfam" id="PF00318">
    <property type="entry name" value="Ribosomal_S2"/>
    <property type="match status" value="1"/>
</dbReference>
<dbReference type="PRINTS" id="PR00395">
    <property type="entry name" value="RIBOSOMALS2"/>
</dbReference>
<dbReference type="SUPFAM" id="SSF52313">
    <property type="entry name" value="Ribosomal protein S2"/>
    <property type="match status" value="1"/>
</dbReference>
<dbReference type="PROSITE" id="PS00962">
    <property type="entry name" value="RIBOSOMAL_S2_1"/>
    <property type="match status" value="1"/>
</dbReference>
<dbReference type="PROSITE" id="PS00963">
    <property type="entry name" value="RIBOSOMAL_S2_2"/>
    <property type="match status" value="1"/>
</dbReference>
<sequence>MTRRYWNINLEEMMEAGVHFGHGIKKWNPRMAPYIYANRKGIHITNLTKTARFLAEACDLVFDAASRGGQFLIVGTKKQAAALVARAAIKARCHYVNKKWLGGMLTNWSTTETRLHQFRDLRTEQKTGRLNRLPKRDAAILKRQLSHLQTYLGGIKYMTGLPDILIILDQQEEYTALRECITLGIPTICLIDTDCDPDLADLPIPANDDAMASIRLILNKLVFAICEGRSSSIRNP</sequence>
<gene>
    <name type="primary">rps2</name>
</gene>
<organism>
    <name type="scientific">Oenothera elata subsp. hookeri</name>
    <name type="common">Hooker's evening primrose</name>
    <name type="synonym">Oenothera hookeri</name>
    <dbReference type="NCBI Taxonomy" id="85636"/>
    <lineage>
        <taxon>Eukaryota</taxon>
        <taxon>Viridiplantae</taxon>
        <taxon>Streptophyta</taxon>
        <taxon>Embryophyta</taxon>
        <taxon>Tracheophyta</taxon>
        <taxon>Spermatophyta</taxon>
        <taxon>Magnoliopsida</taxon>
        <taxon>eudicotyledons</taxon>
        <taxon>Gunneridae</taxon>
        <taxon>Pentapetalae</taxon>
        <taxon>rosids</taxon>
        <taxon>malvids</taxon>
        <taxon>Myrtales</taxon>
        <taxon>Onagraceae</taxon>
        <taxon>Onagroideae</taxon>
        <taxon>Onagreae</taxon>
        <taxon>Oenothera</taxon>
    </lineage>
</organism>
<comment type="subcellular location">
    <subcellularLocation>
        <location>Plastid</location>
        <location>Chloroplast</location>
    </subcellularLocation>
</comment>
<comment type="similarity">
    <text evidence="1">Belongs to the universal ribosomal protein uS2 family.</text>
</comment>
<geneLocation type="chloroplast"/>
<reference key="1">
    <citation type="journal article" date="2000" name="Mol. Gen. Genet.">
        <title>Complete nucleotide sequence of the Oenothera elata plastid chromosome, representing plastome I of the five distinguishable Euoenothera plastomes.</title>
        <authorList>
            <person name="Hupfer H."/>
            <person name="Swiatek M."/>
            <person name="Hornung S."/>
            <person name="Herrmann R.G."/>
            <person name="Maier R.M."/>
            <person name="Chiu W.-L."/>
            <person name="Sears B."/>
        </authorList>
    </citation>
    <scope>NUCLEOTIDE SEQUENCE [LARGE SCALE GENOMIC DNA]</scope>
    <source>
        <strain>cv. Johansen</strain>
    </source>
</reference>
<reference key="2">
    <citation type="journal article" date="2008" name="Nucleic Acids Res.">
        <title>The complete nucleotide sequences of the five genetically distinct plastid genomes of Oenothera, subsection Oenothera: I. Sequence evaluation and plastome evolution.</title>
        <authorList>
            <person name="Greiner S."/>
            <person name="Wang X."/>
            <person name="Rauwolf U."/>
            <person name="Silber M.V."/>
            <person name="Mayer K."/>
            <person name="Meurer J."/>
            <person name="Haberer G."/>
            <person name="Herrmann R.G."/>
        </authorList>
    </citation>
    <scope>SEQUENCE REVISION TO 19; 56; 93 AND 171</scope>
</reference>